<comment type="function">
    <text evidence="1">Pore-forming subunit of a potassium efflux system that confers protection against electrophiles. Catalyzes K(+)/H(+) antiport.</text>
</comment>
<comment type="subunit">
    <text evidence="1">Homodimer. Interacts with the regulatory subunit KefF.</text>
</comment>
<comment type="subcellular location">
    <subcellularLocation>
        <location evidence="1">Cell inner membrane</location>
        <topology evidence="1">Multi-pass membrane protein</topology>
    </subcellularLocation>
</comment>
<comment type="similarity">
    <text evidence="1">Belongs to the monovalent cation:proton antiporter 2 (CPA2) transporter (TC 2.A.37) family. KefC subfamily.</text>
</comment>
<proteinExistence type="inferred from homology"/>
<reference key="1">
    <citation type="journal article" date="2009" name="PLoS Genet.">
        <title>Organised genome dynamics in the Escherichia coli species results in highly diverse adaptive paths.</title>
        <authorList>
            <person name="Touchon M."/>
            <person name="Hoede C."/>
            <person name="Tenaillon O."/>
            <person name="Barbe V."/>
            <person name="Baeriswyl S."/>
            <person name="Bidet P."/>
            <person name="Bingen E."/>
            <person name="Bonacorsi S."/>
            <person name="Bouchier C."/>
            <person name="Bouvet O."/>
            <person name="Calteau A."/>
            <person name="Chiapello H."/>
            <person name="Clermont O."/>
            <person name="Cruveiller S."/>
            <person name="Danchin A."/>
            <person name="Diard M."/>
            <person name="Dossat C."/>
            <person name="Karoui M.E."/>
            <person name="Frapy E."/>
            <person name="Garry L."/>
            <person name="Ghigo J.M."/>
            <person name="Gilles A.M."/>
            <person name="Johnson J."/>
            <person name="Le Bouguenec C."/>
            <person name="Lescat M."/>
            <person name="Mangenot S."/>
            <person name="Martinez-Jehanne V."/>
            <person name="Matic I."/>
            <person name="Nassif X."/>
            <person name="Oztas S."/>
            <person name="Petit M.A."/>
            <person name="Pichon C."/>
            <person name="Rouy Z."/>
            <person name="Ruf C.S."/>
            <person name="Schneider D."/>
            <person name="Tourret J."/>
            <person name="Vacherie B."/>
            <person name="Vallenet D."/>
            <person name="Medigue C."/>
            <person name="Rocha E.P.C."/>
            <person name="Denamur E."/>
        </authorList>
    </citation>
    <scope>NUCLEOTIDE SEQUENCE [LARGE SCALE GENOMIC DNA]</scope>
    <source>
        <strain>UMN026 / ExPEC</strain>
    </source>
</reference>
<organism>
    <name type="scientific">Escherichia coli O17:K52:H18 (strain UMN026 / ExPEC)</name>
    <dbReference type="NCBI Taxonomy" id="585056"/>
    <lineage>
        <taxon>Bacteria</taxon>
        <taxon>Pseudomonadati</taxon>
        <taxon>Pseudomonadota</taxon>
        <taxon>Gammaproteobacteria</taxon>
        <taxon>Enterobacterales</taxon>
        <taxon>Enterobacteriaceae</taxon>
        <taxon>Escherichia</taxon>
    </lineage>
</organism>
<name>KEFC_ECOLU</name>
<keyword id="KW-0050">Antiport</keyword>
<keyword id="KW-0997">Cell inner membrane</keyword>
<keyword id="KW-1003">Cell membrane</keyword>
<keyword id="KW-0406">Ion transport</keyword>
<keyword id="KW-0472">Membrane</keyword>
<keyword id="KW-0630">Potassium</keyword>
<keyword id="KW-0633">Potassium transport</keyword>
<keyword id="KW-0812">Transmembrane</keyword>
<keyword id="KW-1133">Transmembrane helix</keyword>
<keyword id="KW-0813">Transport</keyword>
<accession>B7N7S2</accession>
<gene>
    <name evidence="1" type="primary">kefC</name>
    <name type="ordered locus">ECUMN_0049</name>
</gene>
<protein>
    <recommendedName>
        <fullName evidence="1">Glutathione-regulated potassium-efflux system protein KefC</fullName>
    </recommendedName>
    <alternativeName>
        <fullName evidence="1">K(+)/H(+) antiporter</fullName>
    </alternativeName>
</protein>
<sequence length="620" mass="67738">MDSHTLIQALIYLGSAALIVPIAVRLGLGSVLGYLIAGCIIGPWGLRLVTDAESILHFAEIGVVLMLFIIGLELDPQRLWKLRAAVFGGGALQMVICGGLLGLFCMLLGLRWQVAELIGMTLALSSTAIAMQAMNERNLMMTQMGRSAFAVLLFQDIAAIPLVAMIPLLAASSASTTMGAFALSALKVAGALVLVVLLGRYVTRPALRFVARSGLREVFSAVALFLVFGFGLLLEEVGLSMAMGAFLAGVLLASSEYRHALESDIEPFKGLLLGLFFIGVGMSIDFGTLIENPLRIVILLLGFLIIKIAMLWLIARPLQVPNKQRRWFAVLLGQGSEFAFVVFGAAQMANVLEPEWAKSLTLAVALSMAATPILLVILNRLEQSSSEEAREADEIDEEQPRVIIAGFGRFGQITGRLLLSSGVKMVVLDHDPDHIETLRKFGMKVFYGDATRMDLLESAGAAKAEVLINAIDDPQTNLQLTEMVKEHFPHLQIIARARDVDHYIRLRQAGVEKPERETFEGALKTGRLALESLGLGPYEARERADVFRRFNIQMVEEMAMVENDTKARAAVYKRTSAMLSEIITEDREHLSLIQRHGWQGTEEGKHTGNMADEPETKPSS</sequence>
<feature type="chain" id="PRO_1000145540" description="Glutathione-regulated potassium-efflux system protein KefC">
    <location>
        <begin position="1"/>
        <end position="620"/>
    </location>
</feature>
<feature type="transmembrane region" description="Helical" evidence="1">
    <location>
        <begin position="4"/>
        <end position="24"/>
    </location>
</feature>
<feature type="transmembrane region" description="Helical" evidence="1">
    <location>
        <begin position="26"/>
        <end position="46"/>
    </location>
</feature>
<feature type="transmembrane region" description="Helical" evidence="1">
    <location>
        <begin position="54"/>
        <end position="74"/>
    </location>
</feature>
<feature type="transmembrane region" description="Helical" evidence="1">
    <location>
        <begin position="90"/>
        <end position="110"/>
    </location>
</feature>
<feature type="transmembrane region" description="Helical" evidence="1">
    <location>
        <begin position="114"/>
        <end position="134"/>
    </location>
</feature>
<feature type="transmembrane region" description="Helical" evidence="1">
    <location>
        <begin position="149"/>
        <end position="169"/>
    </location>
</feature>
<feature type="transmembrane region" description="Helical" evidence="1">
    <location>
        <begin position="178"/>
        <end position="198"/>
    </location>
</feature>
<feature type="transmembrane region" description="Helical" evidence="1">
    <location>
        <begin position="218"/>
        <end position="238"/>
    </location>
</feature>
<feature type="transmembrane region" description="Helical" evidence="1">
    <location>
        <begin position="270"/>
        <end position="290"/>
    </location>
</feature>
<feature type="transmembrane region" description="Helical" evidence="1">
    <location>
        <begin position="294"/>
        <end position="314"/>
    </location>
</feature>
<feature type="transmembrane region" description="Helical" evidence="1">
    <location>
        <begin position="327"/>
        <end position="347"/>
    </location>
</feature>
<feature type="transmembrane region" description="Helical" evidence="1">
    <location>
        <begin position="359"/>
        <end position="379"/>
    </location>
</feature>
<feature type="domain" description="RCK N-terminal" evidence="2">
    <location>
        <begin position="399"/>
        <end position="518"/>
    </location>
</feature>
<feature type="region of interest" description="Disordered" evidence="3">
    <location>
        <begin position="597"/>
        <end position="620"/>
    </location>
</feature>
<evidence type="ECO:0000255" key="1">
    <source>
        <dbReference type="HAMAP-Rule" id="MF_01413"/>
    </source>
</evidence>
<evidence type="ECO:0000255" key="2">
    <source>
        <dbReference type="PROSITE-ProRule" id="PRU00543"/>
    </source>
</evidence>
<evidence type="ECO:0000256" key="3">
    <source>
        <dbReference type="SAM" id="MobiDB-lite"/>
    </source>
</evidence>
<dbReference type="EMBL" id="CU928163">
    <property type="protein sequence ID" value="CAR11272.1"/>
    <property type="molecule type" value="Genomic_DNA"/>
</dbReference>
<dbReference type="RefSeq" id="WP_000377105.1">
    <property type="nucleotide sequence ID" value="NC_011751.1"/>
</dbReference>
<dbReference type="RefSeq" id="YP_002410827.1">
    <property type="nucleotide sequence ID" value="NC_011751.1"/>
</dbReference>
<dbReference type="SMR" id="B7N7S2"/>
<dbReference type="STRING" id="585056.ECUMN_0049"/>
<dbReference type="KEGG" id="eum:ECUMN_0049"/>
<dbReference type="PATRIC" id="fig|585056.7.peg.236"/>
<dbReference type="HOGENOM" id="CLU_005126_9_3_6"/>
<dbReference type="Proteomes" id="UP000007097">
    <property type="component" value="Chromosome"/>
</dbReference>
<dbReference type="GO" id="GO:0005886">
    <property type="term" value="C:plasma membrane"/>
    <property type="evidence" value="ECO:0007669"/>
    <property type="project" value="UniProtKB-SubCell"/>
</dbReference>
<dbReference type="GO" id="GO:0019899">
    <property type="term" value="F:enzyme binding"/>
    <property type="evidence" value="ECO:0007669"/>
    <property type="project" value="InterPro"/>
</dbReference>
<dbReference type="GO" id="GO:0015503">
    <property type="term" value="F:glutathione-regulated potassium exporter activity"/>
    <property type="evidence" value="ECO:0007669"/>
    <property type="project" value="UniProtKB-UniRule"/>
</dbReference>
<dbReference type="GO" id="GO:0015643">
    <property type="term" value="F:toxic substance binding"/>
    <property type="evidence" value="ECO:0007669"/>
    <property type="project" value="InterPro"/>
</dbReference>
<dbReference type="GO" id="GO:1902600">
    <property type="term" value="P:proton transmembrane transport"/>
    <property type="evidence" value="ECO:0007669"/>
    <property type="project" value="InterPro"/>
</dbReference>
<dbReference type="GO" id="GO:0051595">
    <property type="term" value="P:response to methylglyoxal"/>
    <property type="evidence" value="ECO:0007669"/>
    <property type="project" value="InterPro"/>
</dbReference>
<dbReference type="FunFam" id="1.20.1530.20:FF:000001">
    <property type="entry name" value="Glutathione-regulated potassium-efflux system protein KefB"/>
    <property type="match status" value="1"/>
</dbReference>
<dbReference type="FunFam" id="3.40.50.720:FF:000036">
    <property type="entry name" value="Glutathione-regulated potassium-efflux system protein KefB"/>
    <property type="match status" value="1"/>
</dbReference>
<dbReference type="Gene3D" id="1.20.1530.20">
    <property type="match status" value="1"/>
</dbReference>
<dbReference type="Gene3D" id="3.40.50.720">
    <property type="entry name" value="NAD(P)-binding Rossmann-like Domain"/>
    <property type="match status" value="1"/>
</dbReference>
<dbReference type="HAMAP" id="MF_01413">
    <property type="entry name" value="K_H_efflux_KefC"/>
    <property type="match status" value="1"/>
</dbReference>
<dbReference type="InterPro" id="IPR006153">
    <property type="entry name" value="Cation/H_exchanger_TM"/>
</dbReference>
<dbReference type="InterPro" id="IPR004771">
    <property type="entry name" value="K/H_exchanger"/>
</dbReference>
<dbReference type="InterPro" id="IPR023941">
    <property type="entry name" value="K_H_efflux_KefC"/>
</dbReference>
<dbReference type="InterPro" id="IPR006036">
    <property type="entry name" value="K_uptake_TrkA"/>
</dbReference>
<dbReference type="InterPro" id="IPR038770">
    <property type="entry name" value="Na+/solute_symporter_sf"/>
</dbReference>
<dbReference type="InterPro" id="IPR036291">
    <property type="entry name" value="NAD(P)-bd_dom_sf"/>
</dbReference>
<dbReference type="InterPro" id="IPR003148">
    <property type="entry name" value="RCK_N"/>
</dbReference>
<dbReference type="NCBIfam" id="TIGR00932">
    <property type="entry name" value="2a37"/>
    <property type="match status" value="1"/>
</dbReference>
<dbReference type="NCBIfam" id="NF002924">
    <property type="entry name" value="PRK03562.1"/>
    <property type="match status" value="1"/>
</dbReference>
<dbReference type="PANTHER" id="PTHR46157:SF3">
    <property type="entry name" value="GLUTATHIONE-REGULATED POTASSIUM-EFFLUX SYSTEM PROTEIN KEFC"/>
    <property type="match status" value="1"/>
</dbReference>
<dbReference type="PANTHER" id="PTHR46157">
    <property type="entry name" value="K(+) EFFLUX ANTIPORTER 3, CHLOROPLASTIC"/>
    <property type="match status" value="1"/>
</dbReference>
<dbReference type="Pfam" id="PF00999">
    <property type="entry name" value="Na_H_Exchanger"/>
    <property type="match status" value="1"/>
</dbReference>
<dbReference type="Pfam" id="PF02254">
    <property type="entry name" value="TrkA_N"/>
    <property type="match status" value="1"/>
</dbReference>
<dbReference type="PRINTS" id="PR00335">
    <property type="entry name" value="KUPTAKETRKA"/>
</dbReference>
<dbReference type="SUPFAM" id="SSF51735">
    <property type="entry name" value="NAD(P)-binding Rossmann-fold domains"/>
    <property type="match status" value="1"/>
</dbReference>
<dbReference type="PROSITE" id="PS51201">
    <property type="entry name" value="RCK_N"/>
    <property type="match status" value="1"/>
</dbReference>